<accession>A1S1G4</accession>
<sequence>MTTDTIVAQATAPGRGGVGIIRVSGKLASDVAHTLLGHLPKPRYADFCDFKAADGSVIDQGIALFFKGPNSFTGEDVLELQGHGGQVVMDMLIRAVLKVKGVRIARPGEFSEQAFMNDKLDLTQAEAIADLIDATSEQAAKSALHSLQGEFSTQVHTLVDKITNLRLYVEAAIDFPDEEVDFLSDGKIAAALYAIIDQLDEVQASAKQGSIIREGMKVVIAGRPNAGKSSLLNALAGKESAIVTDIAGTTRDVLREHIHLDGMPLHIIDTAGLRDTTDEVERIGIERAWSEIASADRVLFMVDGTDTAAVDPHEIWPDFIDRLPKAMGVTVVRNKADLTGEPLEATEEQGYSVYRISAKTGLGVDALKQHLKSLMGYQSNLEGGFIARRRHLEALEQASEHLQLGKVQLEVYLAGELLAEELRMAQQALSEITGEFTSDDLLGKIFSSFCIGK</sequence>
<gene>
    <name evidence="1" type="primary">mnmE</name>
    <name evidence="1" type="synonym">trmE</name>
    <name type="ordered locus">Sama_0008</name>
</gene>
<dbReference type="EC" id="3.6.-.-" evidence="1"/>
<dbReference type="EMBL" id="CP000507">
    <property type="protein sequence ID" value="ABL98220.1"/>
    <property type="molecule type" value="Genomic_DNA"/>
</dbReference>
<dbReference type="RefSeq" id="WP_011758131.1">
    <property type="nucleotide sequence ID" value="NC_008700.1"/>
</dbReference>
<dbReference type="SMR" id="A1S1G4"/>
<dbReference type="STRING" id="326297.Sama_0008"/>
<dbReference type="KEGG" id="saz:Sama_0008"/>
<dbReference type="eggNOG" id="COG0486">
    <property type="taxonomic scope" value="Bacteria"/>
</dbReference>
<dbReference type="HOGENOM" id="CLU_019624_4_1_6"/>
<dbReference type="OrthoDB" id="9805918at2"/>
<dbReference type="Proteomes" id="UP000009175">
    <property type="component" value="Chromosome"/>
</dbReference>
<dbReference type="GO" id="GO:0005829">
    <property type="term" value="C:cytosol"/>
    <property type="evidence" value="ECO:0007669"/>
    <property type="project" value="TreeGrafter"/>
</dbReference>
<dbReference type="GO" id="GO:0005525">
    <property type="term" value="F:GTP binding"/>
    <property type="evidence" value="ECO:0007669"/>
    <property type="project" value="UniProtKB-UniRule"/>
</dbReference>
<dbReference type="GO" id="GO:0003924">
    <property type="term" value="F:GTPase activity"/>
    <property type="evidence" value="ECO:0007669"/>
    <property type="project" value="UniProtKB-UniRule"/>
</dbReference>
<dbReference type="GO" id="GO:0046872">
    <property type="term" value="F:metal ion binding"/>
    <property type="evidence" value="ECO:0007669"/>
    <property type="project" value="UniProtKB-KW"/>
</dbReference>
<dbReference type="GO" id="GO:0030488">
    <property type="term" value="P:tRNA methylation"/>
    <property type="evidence" value="ECO:0007669"/>
    <property type="project" value="TreeGrafter"/>
</dbReference>
<dbReference type="GO" id="GO:0002098">
    <property type="term" value="P:tRNA wobble uridine modification"/>
    <property type="evidence" value="ECO:0007669"/>
    <property type="project" value="TreeGrafter"/>
</dbReference>
<dbReference type="CDD" id="cd04164">
    <property type="entry name" value="trmE"/>
    <property type="match status" value="1"/>
</dbReference>
<dbReference type="CDD" id="cd14858">
    <property type="entry name" value="TrmE_N"/>
    <property type="match status" value="1"/>
</dbReference>
<dbReference type="FunFam" id="3.30.1360.120:FF:000001">
    <property type="entry name" value="tRNA modification GTPase MnmE"/>
    <property type="match status" value="1"/>
</dbReference>
<dbReference type="FunFam" id="3.40.50.300:FF:000249">
    <property type="entry name" value="tRNA modification GTPase MnmE"/>
    <property type="match status" value="1"/>
</dbReference>
<dbReference type="Gene3D" id="3.40.50.300">
    <property type="entry name" value="P-loop containing nucleotide triphosphate hydrolases"/>
    <property type="match status" value="1"/>
</dbReference>
<dbReference type="Gene3D" id="3.30.1360.120">
    <property type="entry name" value="Probable tRNA modification gtpase trme, domain 1"/>
    <property type="match status" value="1"/>
</dbReference>
<dbReference type="Gene3D" id="1.20.120.430">
    <property type="entry name" value="tRNA modification GTPase MnmE domain 2"/>
    <property type="match status" value="1"/>
</dbReference>
<dbReference type="HAMAP" id="MF_00379">
    <property type="entry name" value="GTPase_MnmE"/>
    <property type="match status" value="1"/>
</dbReference>
<dbReference type="InterPro" id="IPR031168">
    <property type="entry name" value="G_TrmE"/>
</dbReference>
<dbReference type="InterPro" id="IPR006073">
    <property type="entry name" value="GTP-bd"/>
</dbReference>
<dbReference type="InterPro" id="IPR018948">
    <property type="entry name" value="GTP-bd_TrmE_N"/>
</dbReference>
<dbReference type="InterPro" id="IPR004520">
    <property type="entry name" value="GTPase_MnmE"/>
</dbReference>
<dbReference type="InterPro" id="IPR027368">
    <property type="entry name" value="MnmE_dom2"/>
</dbReference>
<dbReference type="InterPro" id="IPR025867">
    <property type="entry name" value="MnmE_helical"/>
</dbReference>
<dbReference type="InterPro" id="IPR027417">
    <property type="entry name" value="P-loop_NTPase"/>
</dbReference>
<dbReference type="InterPro" id="IPR005225">
    <property type="entry name" value="Small_GTP-bd"/>
</dbReference>
<dbReference type="InterPro" id="IPR027266">
    <property type="entry name" value="TrmE/GcvT_dom1"/>
</dbReference>
<dbReference type="NCBIfam" id="TIGR00450">
    <property type="entry name" value="mnmE_trmE_thdF"/>
    <property type="match status" value="1"/>
</dbReference>
<dbReference type="NCBIfam" id="NF003661">
    <property type="entry name" value="PRK05291.1-3"/>
    <property type="match status" value="1"/>
</dbReference>
<dbReference type="NCBIfam" id="TIGR00231">
    <property type="entry name" value="small_GTP"/>
    <property type="match status" value="1"/>
</dbReference>
<dbReference type="PANTHER" id="PTHR42714">
    <property type="entry name" value="TRNA MODIFICATION GTPASE GTPBP3"/>
    <property type="match status" value="1"/>
</dbReference>
<dbReference type="PANTHER" id="PTHR42714:SF2">
    <property type="entry name" value="TRNA MODIFICATION GTPASE GTPBP3, MITOCHONDRIAL"/>
    <property type="match status" value="1"/>
</dbReference>
<dbReference type="Pfam" id="PF01926">
    <property type="entry name" value="MMR_HSR1"/>
    <property type="match status" value="1"/>
</dbReference>
<dbReference type="Pfam" id="PF12631">
    <property type="entry name" value="MnmE_helical"/>
    <property type="match status" value="1"/>
</dbReference>
<dbReference type="Pfam" id="PF10396">
    <property type="entry name" value="TrmE_N"/>
    <property type="match status" value="1"/>
</dbReference>
<dbReference type="SUPFAM" id="SSF52540">
    <property type="entry name" value="P-loop containing nucleoside triphosphate hydrolases"/>
    <property type="match status" value="1"/>
</dbReference>
<dbReference type="SUPFAM" id="SSF116878">
    <property type="entry name" value="TrmE connector domain"/>
    <property type="match status" value="1"/>
</dbReference>
<dbReference type="PROSITE" id="PS51709">
    <property type="entry name" value="G_TRME"/>
    <property type="match status" value="1"/>
</dbReference>
<proteinExistence type="inferred from homology"/>
<comment type="function">
    <text evidence="1">Exhibits a very high intrinsic GTPase hydrolysis rate. Involved in the addition of a carboxymethylaminomethyl (cmnm) group at the wobble position (U34) of certain tRNAs, forming tRNA-cmnm(5)s(2)U34.</text>
</comment>
<comment type="cofactor">
    <cofactor evidence="1">
        <name>K(+)</name>
        <dbReference type="ChEBI" id="CHEBI:29103"/>
    </cofactor>
    <text evidence="1">Binds 1 potassium ion per subunit.</text>
</comment>
<comment type="subunit">
    <text evidence="1">Homodimer. Heterotetramer of two MnmE and two MnmG subunits.</text>
</comment>
<comment type="subcellular location">
    <subcellularLocation>
        <location evidence="1">Cytoplasm</location>
    </subcellularLocation>
</comment>
<comment type="similarity">
    <text evidence="1">Belongs to the TRAFAC class TrmE-Era-EngA-EngB-Septin-like GTPase superfamily. TrmE GTPase family.</text>
</comment>
<protein>
    <recommendedName>
        <fullName evidence="1">tRNA modification GTPase MnmE</fullName>
        <ecNumber evidence="1">3.6.-.-</ecNumber>
    </recommendedName>
</protein>
<evidence type="ECO:0000255" key="1">
    <source>
        <dbReference type="HAMAP-Rule" id="MF_00379"/>
    </source>
</evidence>
<name>MNME_SHEAM</name>
<organism>
    <name type="scientific">Shewanella amazonensis (strain ATCC BAA-1098 / SB2B)</name>
    <dbReference type="NCBI Taxonomy" id="326297"/>
    <lineage>
        <taxon>Bacteria</taxon>
        <taxon>Pseudomonadati</taxon>
        <taxon>Pseudomonadota</taxon>
        <taxon>Gammaproteobacteria</taxon>
        <taxon>Alteromonadales</taxon>
        <taxon>Shewanellaceae</taxon>
        <taxon>Shewanella</taxon>
    </lineage>
</organism>
<keyword id="KW-0963">Cytoplasm</keyword>
<keyword id="KW-0342">GTP-binding</keyword>
<keyword id="KW-0378">Hydrolase</keyword>
<keyword id="KW-0460">Magnesium</keyword>
<keyword id="KW-0479">Metal-binding</keyword>
<keyword id="KW-0547">Nucleotide-binding</keyword>
<keyword id="KW-0630">Potassium</keyword>
<keyword id="KW-1185">Reference proteome</keyword>
<keyword id="KW-0819">tRNA processing</keyword>
<feature type="chain" id="PRO_1000048872" description="tRNA modification GTPase MnmE">
    <location>
        <begin position="1"/>
        <end position="453"/>
    </location>
</feature>
<feature type="domain" description="TrmE-type G">
    <location>
        <begin position="215"/>
        <end position="376"/>
    </location>
</feature>
<feature type="binding site" evidence="1">
    <location>
        <position position="22"/>
    </location>
    <ligand>
        <name>(6S)-5-formyl-5,6,7,8-tetrahydrofolate</name>
        <dbReference type="ChEBI" id="CHEBI:57457"/>
    </ligand>
</feature>
<feature type="binding site" evidence="1">
    <location>
        <position position="79"/>
    </location>
    <ligand>
        <name>(6S)-5-formyl-5,6,7,8-tetrahydrofolate</name>
        <dbReference type="ChEBI" id="CHEBI:57457"/>
    </ligand>
</feature>
<feature type="binding site" evidence="1">
    <location>
        <position position="119"/>
    </location>
    <ligand>
        <name>(6S)-5-formyl-5,6,7,8-tetrahydrofolate</name>
        <dbReference type="ChEBI" id="CHEBI:57457"/>
    </ligand>
</feature>
<feature type="binding site" evidence="1">
    <location>
        <begin position="225"/>
        <end position="230"/>
    </location>
    <ligand>
        <name>GTP</name>
        <dbReference type="ChEBI" id="CHEBI:37565"/>
    </ligand>
</feature>
<feature type="binding site" evidence="1">
    <location>
        <position position="225"/>
    </location>
    <ligand>
        <name>K(+)</name>
        <dbReference type="ChEBI" id="CHEBI:29103"/>
    </ligand>
</feature>
<feature type="binding site" evidence="1">
    <location>
        <position position="229"/>
    </location>
    <ligand>
        <name>Mg(2+)</name>
        <dbReference type="ChEBI" id="CHEBI:18420"/>
    </ligand>
</feature>
<feature type="binding site" evidence="1">
    <location>
        <begin position="244"/>
        <end position="250"/>
    </location>
    <ligand>
        <name>GTP</name>
        <dbReference type="ChEBI" id="CHEBI:37565"/>
    </ligand>
</feature>
<feature type="binding site" evidence="1">
    <location>
        <position position="244"/>
    </location>
    <ligand>
        <name>K(+)</name>
        <dbReference type="ChEBI" id="CHEBI:29103"/>
    </ligand>
</feature>
<feature type="binding site" evidence="1">
    <location>
        <position position="246"/>
    </location>
    <ligand>
        <name>K(+)</name>
        <dbReference type="ChEBI" id="CHEBI:29103"/>
    </ligand>
</feature>
<feature type="binding site" evidence="1">
    <location>
        <position position="249"/>
    </location>
    <ligand>
        <name>K(+)</name>
        <dbReference type="ChEBI" id="CHEBI:29103"/>
    </ligand>
</feature>
<feature type="binding site" evidence="1">
    <location>
        <position position="250"/>
    </location>
    <ligand>
        <name>Mg(2+)</name>
        <dbReference type="ChEBI" id="CHEBI:18420"/>
    </ligand>
</feature>
<feature type="binding site" evidence="1">
    <location>
        <begin position="269"/>
        <end position="272"/>
    </location>
    <ligand>
        <name>GTP</name>
        <dbReference type="ChEBI" id="CHEBI:37565"/>
    </ligand>
</feature>
<feature type="binding site" evidence="1">
    <location>
        <begin position="334"/>
        <end position="337"/>
    </location>
    <ligand>
        <name>GTP</name>
        <dbReference type="ChEBI" id="CHEBI:37565"/>
    </ligand>
</feature>
<feature type="binding site" evidence="1">
    <location>
        <position position="453"/>
    </location>
    <ligand>
        <name>(6S)-5-formyl-5,6,7,8-tetrahydrofolate</name>
        <dbReference type="ChEBI" id="CHEBI:57457"/>
    </ligand>
</feature>
<reference key="1">
    <citation type="submission" date="2006-12" db="EMBL/GenBank/DDBJ databases">
        <title>Complete sequence of Shewanella amazonensis SB2B.</title>
        <authorList>
            <consortium name="US DOE Joint Genome Institute"/>
            <person name="Copeland A."/>
            <person name="Lucas S."/>
            <person name="Lapidus A."/>
            <person name="Barry K."/>
            <person name="Detter J.C."/>
            <person name="Glavina del Rio T."/>
            <person name="Hammon N."/>
            <person name="Israni S."/>
            <person name="Dalin E."/>
            <person name="Tice H."/>
            <person name="Pitluck S."/>
            <person name="Munk A.C."/>
            <person name="Brettin T."/>
            <person name="Bruce D."/>
            <person name="Han C."/>
            <person name="Tapia R."/>
            <person name="Gilna P."/>
            <person name="Schmutz J."/>
            <person name="Larimer F."/>
            <person name="Land M."/>
            <person name="Hauser L."/>
            <person name="Kyrpides N."/>
            <person name="Mikhailova N."/>
            <person name="Fredrickson J."/>
            <person name="Richardson P."/>
        </authorList>
    </citation>
    <scope>NUCLEOTIDE SEQUENCE [LARGE SCALE GENOMIC DNA]</scope>
    <source>
        <strain>ATCC BAA-1098 / SB2B</strain>
    </source>
</reference>